<reference key="1">
    <citation type="journal article" date="1998" name="Glycobiology">
        <title>Cloning and functional expression of the human GlcNAc-1-P transferase, the enzyme for the committed step of the dolichol cycle, by heterologous complementation in Saccharomyces cerevisiae.</title>
        <authorList>
            <person name="Eckert V."/>
            <person name="Blank M."/>
            <person name="Mazhari-Tabrizi R."/>
            <person name="Mumberg D."/>
            <person name="Funk M."/>
            <person name="Schwarz R.T."/>
        </authorList>
    </citation>
    <scope>NUCLEOTIDE SEQUENCE [MRNA] (ISOFORM 2)</scope>
    <scope>FUNCTION</scope>
    <scope>CATALYTIC ACTIVITY</scope>
    <scope>ACTIVITY REGULATION</scope>
    <scope>PATHWAY</scope>
    <source>
        <tissue>Lung</tissue>
    </source>
</reference>
<reference key="2">
    <citation type="submission" date="1998-05" db="EMBL/GenBank/DDBJ databases">
        <title>Putative genomic sequence of GlcNAc-1-P transferase on chromosome 11q23.</title>
        <authorList>
            <person name="Dagnino F."/>
            <person name="Regis S."/>
            <person name="Filocamo M."/>
            <person name="Gatti R."/>
        </authorList>
    </citation>
    <scope>NUCLEOTIDE SEQUENCE [GENOMIC DNA] (ISOFORM 1)</scope>
</reference>
<reference key="3">
    <citation type="submission" date="2003-05" db="EMBL/GenBank/DDBJ databases">
        <title>Cloning of human full-length CDSs in BD Creator(TM) system donor vector.</title>
        <authorList>
            <person name="Kalnine N."/>
            <person name="Chen X."/>
            <person name="Rolfs A."/>
            <person name="Halleck A."/>
            <person name="Hines L."/>
            <person name="Eisenstein S."/>
            <person name="Koundinya M."/>
            <person name="Raphael J."/>
            <person name="Moreira D."/>
            <person name="Kelley T."/>
            <person name="LaBaer J."/>
            <person name="Lin Y."/>
            <person name="Phelan M."/>
            <person name="Farmer A."/>
        </authorList>
    </citation>
    <scope>NUCLEOTIDE SEQUENCE [LARGE SCALE MRNA] (ISOFORM 1)</scope>
</reference>
<reference evidence="21 22" key="4">
    <citation type="journal article" date="2018" name="Nat. Struct. Mol. Biol.">
        <title>GlcNAc-1-P-transferase-tunicamycin complex structure reveals basis for inhibition of N-glycosylation.</title>
        <authorList>
            <person name="Yoo J."/>
            <person name="Mashalidis E.H."/>
            <person name="Kuk A.C.Y."/>
            <person name="Yamamoto K."/>
            <person name="Kaeser B."/>
            <person name="Ichikawa S."/>
            <person name="Lee S.Y."/>
        </authorList>
    </citation>
    <scope>X-RAY CRYSTALLOGRAPHY (2.95 ANGSTROMS) IN COMPLEX WITH TUNICAMYCIN INHIBITOR</scope>
    <scope>FUNCTION</scope>
    <scope>SUBUNIT</scope>
    <scope>PATHWAY</scope>
    <scope>TOPOLOGY</scope>
    <scope>ACTIVITY REGULATION</scope>
    <scope>COFACTOR</scope>
    <scope>CATALYTIC ACTIVITY</scope>
    <scope>MUTAGENESIS OF ASP-252</scope>
</reference>
<reference evidence="19 20 23 24" key="5">
    <citation type="journal article" date="2018" name="Cell">
        <title>Structures of DPAGT1 Explain Glycosylation Disease Mechanisms and Advance TB Antibiotic Design.</title>
        <authorList>
            <person name="Dong Y.Y."/>
            <person name="Wang H."/>
            <person name="Pike A.C.W."/>
            <person name="Cochrane S.A."/>
            <person name="Hamedzadeh S."/>
            <person name="Wyszynski F.J."/>
            <person name="Bushell S.R."/>
            <person name="Royer S.F."/>
            <person name="Widdick D.A."/>
            <person name="Sajid A."/>
            <person name="Boshoff H.I."/>
            <person name="Park Y."/>
            <person name="Lucas R."/>
            <person name="Liu W.M."/>
            <person name="Lee S.S."/>
            <person name="Machida T."/>
            <person name="Minall L."/>
            <person name="Mehmood S."/>
            <person name="Belaya K."/>
            <person name="Liu W.W."/>
            <person name="Chu A."/>
            <person name="Shrestha L."/>
            <person name="Mukhopadhyay S.M.M."/>
            <person name="Strain-Damerell C."/>
            <person name="Chalk R."/>
            <person name="Burgess-Brown N.A."/>
            <person name="Bibb M.J."/>
            <person name="Barry Iii C.E."/>
            <person name="Robinson C.V."/>
            <person name="Beeson D."/>
            <person name="Davis B.G."/>
            <person name="Carpenter E.P."/>
        </authorList>
    </citation>
    <scope>X-RAY CRYSTALLOGRAPHY (3.10 ANGSTROMS) OF WILD-TYPE AND VARIANT CMS13 GLY-264 IN COMPLEXES WITH UDP-N-ACETYLGLUCOSAMINE AND TUNICAMYCIN</scope>
    <scope>FUNCTION</scope>
    <scope>CATALYTIC ACTIVITY</scope>
    <scope>BIOPHYSICOCHEMICAL PROPERTIES</scope>
    <scope>COFACTOR</scope>
    <scope>PATHWAY</scope>
    <scope>ACTIVITY REGULATION</scope>
    <scope>SUBUNIT</scope>
    <scope>TOPOLOGY</scope>
    <scope>CHARACTERIZATION OF VARIANT CDG1J CYS-170</scope>
    <scope>CHARACTERIZATION OF VARIANTS CMS13 ILE-108; MET-120; SER-160; LEU-168; ILE-171; SER-192 AND GLY-264</scope>
    <scope>MUTAGENESIS OF PRO-30; ILE-69; LEU-103; ALA-114; ASP-115; ASP-116; TRP-122; LYS-125; LEU-168; ASN-182; ASN-185; ASP-252; VAL-264; ARG-301; HIS-302; ARG-303 AND LEU-385</scope>
</reference>
<reference key="6">
    <citation type="journal article" date="2004" name="Genome Res.">
        <title>The status, quality, and expansion of the NIH full-length cDNA project: the Mammalian Gene Collection (MGC).</title>
        <authorList>
            <consortium name="The MGC Project Team"/>
        </authorList>
    </citation>
    <scope>NUCLEOTIDE SEQUENCE [LARGE SCALE MRNA] (ISOFORMS 1 AND 3)</scope>
    <scope>VARIANT VAL-393</scope>
    <source>
        <tissue>Lung</tissue>
    </source>
</reference>
<reference key="7">
    <citation type="journal article" date="2003" name="Hum. Mutat.">
        <title>Deficiency of UDP-GlcNAc:dolichol phosphate N-acetylglucosamine-1 phosphate transferase (DPAGT1) causes a novel congenital disorder of glycosylation type Ij.</title>
        <authorList>
            <person name="Wu X."/>
            <person name="Rush J.S."/>
            <person name="Karaoglu D."/>
            <person name="Krasnewich D."/>
            <person name="Lubinsky M.S."/>
            <person name="Waechter C.J."/>
            <person name="Gilmore R."/>
            <person name="Freeze H.H."/>
        </authorList>
    </citation>
    <scope>VARIANT CDG1J CYS-170</scope>
</reference>
<reference key="8">
    <citation type="journal article" date="2006" name="Science">
        <title>The consensus coding sequences of human breast and colorectal cancers.</title>
        <authorList>
            <person name="Sjoeblom T."/>
            <person name="Jones S."/>
            <person name="Wood L.D."/>
            <person name="Parsons D.W."/>
            <person name="Lin J."/>
            <person name="Barber T.D."/>
            <person name="Mandelker D."/>
            <person name="Leary R.J."/>
            <person name="Ptak J."/>
            <person name="Silliman N."/>
            <person name="Szabo S."/>
            <person name="Buckhaults P."/>
            <person name="Farrell C."/>
            <person name="Meeh P."/>
            <person name="Markowitz S.D."/>
            <person name="Willis J."/>
            <person name="Dawson D."/>
            <person name="Willson J.K.V."/>
            <person name="Gazdar A.F."/>
            <person name="Hartigan J."/>
            <person name="Wu L."/>
            <person name="Liu C."/>
            <person name="Parmigiani G."/>
            <person name="Park B.H."/>
            <person name="Bachman K.E."/>
            <person name="Papadopoulos N."/>
            <person name="Vogelstein B."/>
            <person name="Kinzler K.W."/>
            <person name="Velculescu V.E."/>
        </authorList>
    </citation>
    <scope>VARIANT [LARGE SCALE ANALYSIS] ILE-9</scope>
</reference>
<reference key="9">
    <citation type="journal article" date="2012" name="Am. J. Hum. Genet.">
        <title>Mutations in DPAGT1 cause a limb-girdle congenital myasthenic syndrome with tubular aggregates.</title>
        <authorList>
            <person name="Belaya K."/>
            <person name="Finlayson S."/>
            <person name="Slater C.R."/>
            <person name="Cossins J."/>
            <person name="Liu W.W."/>
            <person name="Maxwell S."/>
            <person name="McGowan S.J."/>
            <person name="Maslau S."/>
            <person name="Twigg S.R."/>
            <person name="Walls T.J."/>
            <person name="Pascual Pascual S.I."/>
            <person name="Palace J."/>
            <person name="Beeson D."/>
        </authorList>
    </citation>
    <scope>VARIANTS CMS13 ILE-108; ILE-117; MET-120; SER-160; SER-192 AND GLY-264</scope>
</reference>
<gene>
    <name evidence="10 12 13 18" type="primary">DPAGT1</name>
    <name type="synonym">DPAGT2</name>
</gene>
<dbReference type="EC" id="2.7.8.15" evidence="7 8 9"/>
<dbReference type="EMBL" id="Z82022">
    <property type="protein sequence ID" value="CAB04787.1"/>
    <property type="molecule type" value="mRNA"/>
</dbReference>
<dbReference type="EMBL" id="AF070443">
    <property type="protein sequence ID" value="AAG43168.1"/>
    <property type="molecule type" value="Genomic_DNA"/>
</dbReference>
<dbReference type="EMBL" id="AF069061">
    <property type="protein sequence ID" value="AAG43168.1"/>
    <property type="status" value="JOINED"/>
    <property type="molecule type" value="Genomic_DNA"/>
</dbReference>
<dbReference type="EMBL" id="BT006802">
    <property type="protein sequence ID" value="AAP35448.1"/>
    <property type="molecule type" value="mRNA"/>
</dbReference>
<dbReference type="EMBL" id="BC000325">
    <property type="protein sequence ID" value="AAH00325.1"/>
    <property type="molecule type" value="mRNA"/>
</dbReference>
<dbReference type="EMBL" id="BC047771">
    <property type="protein sequence ID" value="AAH47771.1"/>
    <property type="molecule type" value="mRNA"/>
</dbReference>
<dbReference type="CCDS" id="CCDS8411.1">
    <molecule id="Q9H3H5-1"/>
</dbReference>
<dbReference type="RefSeq" id="NP_001373.2">
    <molecule id="Q9H3H5-1"/>
    <property type="nucleotide sequence ID" value="NM_001382.3"/>
</dbReference>
<dbReference type="RefSeq" id="XP_016872782.1">
    <property type="nucleotide sequence ID" value="XM_017017293.1"/>
</dbReference>
<dbReference type="RefSeq" id="XP_047282464.1">
    <molecule id="Q9H3H5-1"/>
    <property type="nucleotide sequence ID" value="XM_047426508.1"/>
</dbReference>
<dbReference type="RefSeq" id="XP_054223904.1">
    <molecule id="Q9H3H5-1"/>
    <property type="nucleotide sequence ID" value="XM_054367929.1"/>
</dbReference>
<dbReference type="PDB" id="5LEV">
    <property type="method" value="X-ray"/>
    <property type="resolution" value="3.20 A"/>
    <property type="chains" value="A=1-408"/>
</dbReference>
<dbReference type="PDB" id="5O5E">
    <property type="method" value="X-ray"/>
    <property type="resolution" value="3.40 A"/>
    <property type="chains" value="A=1-408"/>
</dbReference>
<dbReference type="PDB" id="6BW5">
    <property type="method" value="X-ray"/>
    <property type="resolution" value="3.10 A"/>
    <property type="chains" value="A/B/C/D=1-408"/>
</dbReference>
<dbReference type="PDB" id="6BW6">
    <property type="method" value="X-ray"/>
    <property type="resolution" value="2.95 A"/>
    <property type="chains" value="A/B/C/D=1-408"/>
</dbReference>
<dbReference type="PDB" id="6FM9">
    <property type="method" value="X-ray"/>
    <property type="resolution" value="3.60 A"/>
    <property type="chains" value="A=1-408"/>
</dbReference>
<dbReference type="PDB" id="6FWZ">
    <property type="method" value="X-ray"/>
    <property type="resolution" value="3.10 A"/>
    <property type="chains" value="A=1-408"/>
</dbReference>
<dbReference type="PDB" id="6JQ3">
    <property type="method" value="X-ray"/>
    <property type="resolution" value="2.50 A"/>
    <property type="chains" value="P=204-211"/>
</dbReference>
<dbReference type="PDBsum" id="5LEV"/>
<dbReference type="PDBsum" id="5O5E"/>
<dbReference type="PDBsum" id="6BW5"/>
<dbReference type="PDBsum" id="6BW6"/>
<dbReference type="PDBsum" id="6FM9"/>
<dbReference type="PDBsum" id="6FWZ"/>
<dbReference type="PDBsum" id="6JQ3"/>
<dbReference type="SMR" id="Q9H3H5"/>
<dbReference type="BioGRID" id="108133">
    <property type="interactions" value="18"/>
</dbReference>
<dbReference type="FunCoup" id="Q9H3H5">
    <property type="interactions" value="2182"/>
</dbReference>
<dbReference type="IntAct" id="Q9H3H5">
    <property type="interactions" value="14"/>
</dbReference>
<dbReference type="STRING" id="9606.ENSP00000386597"/>
<dbReference type="BindingDB" id="Q9H3H5"/>
<dbReference type="ChEMBL" id="CHEMBL4739704"/>
<dbReference type="GlyCosmos" id="Q9H3H5">
    <property type="glycosylation" value="1 site, No reported glycans"/>
</dbReference>
<dbReference type="GlyGen" id="Q9H3H5">
    <property type="glycosylation" value="3 sites, 1 N-linked glycan (1 site), 1 O-linked glycan (1 site)"/>
</dbReference>
<dbReference type="iPTMnet" id="Q9H3H5"/>
<dbReference type="PhosphoSitePlus" id="Q9H3H5"/>
<dbReference type="BioMuta" id="DPAGT1"/>
<dbReference type="DMDM" id="18202943"/>
<dbReference type="jPOST" id="Q9H3H5"/>
<dbReference type="MassIVE" id="Q9H3H5"/>
<dbReference type="PaxDb" id="9606-ENSP00000386597"/>
<dbReference type="PeptideAtlas" id="Q9H3H5"/>
<dbReference type="ProteomicsDB" id="80717">
    <molecule id="Q9H3H5-1"/>
</dbReference>
<dbReference type="ProteomicsDB" id="80718">
    <molecule id="Q9H3H5-2"/>
</dbReference>
<dbReference type="ProteomicsDB" id="80719">
    <molecule id="Q9H3H5-3"/>
</dbReference>
<dbReference type="Pumba" id="Q9H3H5"/>
<dbReference type="Antibodypedia" id="32608">
    <property type="antibodies" value="152 antibodies from 24 providers"/>
</dbReference>
<dbReference type="DNASU" id="1798"/>
<dbReference type="Ensembl" id="ENST00000354202.9">
    <molecule id="Q9H3H5-1"/>
    <property type="protein sequence ID" value="ENSP00000346142.4"/>
    <property type="gene ID" value="ENSG00000172269.20"/>
</dbReference>
<dbReference type="Ensembl" id="ENST00000409993.6">
    <molecule id="Q9H3H5-1"/>
    <property type="protein sequence ID" value="ENSP00000386597.2"/>
    <property type="gene ID" value="ENSG00000172269.20"/>
</dbReference>
<dbReference type="GeneID" id="1798"/>
<dbReference type="KEGG" id="hsa:1798"/>
<dbReference type="MANE-Select" id="ENST00000354202.9">
    <property type="protein sequence ID" value="ENSP00000346142.4"/>
    <property type="RefSeq nucleotide sequence ID" value="NM_001382.4"/>
    <property type="RefSeq protein sequence ID" value="NP_001373.2"/>
</dbReference>
<dbReference type="UCSC" id="uc001pvi.4">
    <molecule id="Q9H3H5-1"/>
    <property type="organism name" value="human"/>
</dbReference>
<dbReference type="AGR" id="HGNC:2995"/>
<dbReference type="CTD" id="1798"/>
<dbReference type="DisGeNET" id="1798"/>
<dbReference type="GeneCards" id="DPAGT1"/>
<dbReference type="GeneReviews" id="DPAGT1"/>
<dbReference type="HGNC" id="HGNC:2995">
    <property type="gene designation" value="DPAGT1"/>
</dbReference>
<dbReference type="HPA" id="ENSG00000172269">
    <property type="expression patterns" value="Low tissue specificity"/>
</dbReference>
<dbReference type="MalaCards" id="DPAGT1"/>
<dbReference type="MIM" id="191350">
    <property type="type" value="gene"/>
</dbReference>
<dbReference type="MIM" id="608093">
    <property type="type" value="phenotype"/>
</dbReference>
<dbReference type="MIM" id="614750">
    <property type="type" value="phenotype"/>
</dbReference>
<dbReference type="neXtProt" id="NX_Q9H3H5"/>
<dbReference type="OpenTargets" id="ENSG00000172269"/>
<dbReference type="Orphanet" id="353327">
    <property type="disease" value="Congenital myasthenic syndromes with glycosylation defect"/>
</dbReference>
<dbReference type="Orphanet" id="86309">
    <property type="disease" value="DPAGT1-CDG"/>
</dbReference>
<dbReference type="PharmGKB" id="PA27460"/>
<dbReference type="VEuPathDB" id="HostDB:ENSG00000172269"/>
<dbReference type="eggNOG" id="KOG2788">
    <property type="taxonomic scope" value="Eukaryota"/>
</dbReference>
<dbReference type="GeneTree" id="ENSGT00390000011424"/>
<dbReference type="HOGENOM" id="CLU_029942_0_1_1"/>
<dbReference type="InParanoid" id="Q9H3H5"/>
<dbReference type="OMA" id="LPHFNAR"/>
<dbReference type="OrthoDB" id="10262326at2759"/>
<dbReference type="PAN-GO" id="Q9H3H5">
    <property type="GO annotations" value="2 GO annotations based on evolutionary models"/>
</dbReference>
<dbReference type="PhylomeDB" id="Q9H3H5"/>
<dbReference type="TreeFam" id="TF313734"/>
<dbReference type="BRENDA" id="2.7.8.15">
    <property type="organism ID" value="2681"/>
</dbReference>
<dbReference type="PathwayCommons" id="Q9H3H5"/>
<dbReference type="Reactome" id="R-HSA-446193">
    <property type="pathway name" value="Biosynthesis of the N-glycan precursor (dolichol lipid-linked oligosaccharide, LLO) and transfer to a nascent protein"/>
</dbReference>
<dbReference type="Reactome" id="R-HSA-4549356">
    <property type="pathway name" value="Defective DPAGT1 causes CDG-1j, CMSTA2"/>
</dbReference>
<dbReference type="SignaLink" id="Q9H3H5"/>
<dbReference type="UniPathway" id="UPA00378"/>
<dbReference type="BioGRID-ORCS" id="1798">
    <property type="hits" value="647 hits in 1176 CRISPR screens"/>
</dbReference>
<dbReference type="ChiTaRS" id="DPAGT1">
    <property type="organism name" value="human"/>
</dbReference>
<dbReference type="GeneWiki" id="DPAGT1"/>
<dbReference type="GenomeRNAi" id="1798"/>
<dbReference type="Pharos" id="Q9H3H5">
    <property type="development level" value="Tchem"/>
</dbReference>
<dbReference type="PRO" id="PR:Q9H3H5"/>
<dbReference type="Proteomes" id="UP000005640">
    <property type="component" value="Chromosome 11"/>
</dbReference>
<dbReference type="RNAct" id="Q9H3H5">
    <property type="molecule type" value="protein"/>
</dbReference>
<dbReference type="Bgee" id="ENSG00000172269">
    <property type="expression patterns" value="Expressed in mucosa of transverse colon and 188 other cell types or tissues"/>
</dbReference>
<dbReference type="ExpressionAtlas" id="Q9H3H5">
    <property type="expression patterns" value="baseline and differential"/>
</dbReference>
<dbReference type="GO" id="GO:0005789">
    <property type="term" value="C:endoplasmic reticulum membrane"/>
    <property type="evidence" value="ECO:0000250"/>
    <property type="project" value="UniProtKB"/>
</dbReference>
<dbReference type="GO" id="GO:0043231">
    <property type="term" value="C:intracellular membrane-bounded organelle"/>
    <property type="evidence" value="ECO:0000314"/>
    <property type="project" value="UniProtKB"/>
</dbReference>
<dbReference type="GO" id="GO:0016020">
    <property type="term" value="C:membrane"/>
    <property type="evidence" value="ECO:0000314"/>
    <property type="project" value="UniProtKB"/>
</dbReference>
<dbReference type="GO" id="GO:0016757">
    <property type="term" value="F:glycosyltransferase activity"/>
    <property type="evidence" value="ECO:0007669"/>
    <property type="project" value="UniProtKB-KW"/>
</dbReference>
<dbReference type="GO" id="GO:0042802">
    <property type="term" value="F:identical protein binding"/>
    <property type="evidence" value="ECO:0000250"/>
    <property type="project" value="UniProtKB"/>
</dbReference>
<dbReference type="GO" id="GO:0046872">
    <property type="term" value="F:metal ion binding"/>
    <property type="evidence" value="ECO:0007669"/>
    <property type="project" value="UniProtKB-KW"/>
</dbReference>
<dbReference type="GO" id="GO:0003975">
    <property type="term" value="F:UDP-N-acetylglucosamine-dolichyl-phosphate N-acetylglucosaminephosphotransferase activity"/>
    <property type="evidence" value="ECO:0000314"/>
    <property type="project" value="UniProtKB"/>
</dbReference>
<dbReference type="GO" id="GO:0003976">
    <property type="term" value="F:UDP-N-acetylglucosamine-lysosomal-enzyme N-acetylglucosaminephosphotransferase activity"/>
    <property type="evidence" value="ECO:0000314"/>
    <property type="project" value="MGI"/>
</dbReference>
<dbReference type="GO" id="GO:0006488">
    <property type="term" value="P:dolichol-linked oligosaccharide biosynthetic process"/>
    <property type="evidence" value="ECO:0000314"/>
    <property type="project" value="UniProtKB"/>
</dbReference>
<dbReference type="GO" id="GO:0006487">
    <property type="term" value="P:protein N-linked glycosylation"/>
    <property type="evidence" value="ECO:0000315"/>
    <property type="project" value="UniProtKB"/>
</dbReference>
<dbReference type="CDD" id="cd06855">
    <property type="entry name" value="GT_GPT_euk"/>
    <property type="match status" value="1"/>
</dbReference>
<dbReference type="InterPro" id="IPR048439">
    <property type="entry name" value="DPAGT1_ins"/>
</dbReference>
<dbReference type="InterPro" id="IPR000715">
    <property type="entry name" value="Glycosyl_transferase_4"/>
</dbReference>
<dbReference type="InterPro" id="IPR033895">
    <property type="entry name" value="GPT"/>
</dbReference>
<dbReference type="PANTHER" id="PTHR10571">
    <property type="entry name" value="UDP-N-ACETYLGLUCOSAMINE--DOLICHYL-PHOSPHATE N-ACETYLGLUCOSAMINEPHOSPHOTRANSFERASE"/>
    <property type="match status" value="1"/>
</dbReference>
<dbReference type="PANTHER" id="PTHR10571:SF0">
    <property type="entry name" value="UDP-N-ACETYLGLUCOSAMINE--DOLICHYL-PHOSPHATE N-ACETYLGLUCOSAMINEPHOSPHOTRANSFERASE"/>
    <property type="match status" value="1"/>
</dbReference>
<dbReference type="Pfam" id="PF21383">
    <property type="entry name" value="DPAGT1_ins"/>
    <property type="match status" value="1"/>
</dbReference>
<dbReference type="Pfam" id="PF00953">
    <property type="entry name" value="Glycos_transf_4"/>
    <property type="match status" value="1"/>
</dbReference>
<accession>Q9H3H5</accession>
<accession>O15216</accession>
<accession>Q86WV9</accession>
<accession>Q9BWE6</accession>
<feature type="chain" id="PRO_0000108761" description="UDP-N-acetylglucosamine--dolichyl-phosphate N-acetylglucosaminephosphotransferase">
    <location>
        <begin position="1"/>
        <end position="408"/>
    </location>
</feature>
<feature type="topological domain" description="Lumenal" evidence="7">
    <location>
        <begin position="1"/>
        <end position="10"/>
    </location>
</feature>
<feature type="transmembrane region" description="Helical; Name=Helix 1" evidence="7">
    <location>
        <begin position="11"/>
        <end position="38"/>
    </location>
</feature>
<feature type="topological domain" description="Cytoplasmic" evidence="7">
    <location>
        <begin position="39"/>
        <end position="58"/>
    </location>
</feature>
<feature type="transmembrane region" description="Helical; Name=Helix 2" evidence="7">
    <location>
        <begin position="59"/>
        <end position="78"/>
    </location>
</feature>
<feature type="topological domain" description="Lumenal" evidence="7">
    <location>
        <begin position="79"/>
        <end position="91"/>
    </location>
</feature>
<feature type="transmembrane region" description="Helical; Name=Helix 3" evidence="7">
    <location>
        <begin position="92"/>
        <end position="118"/>
    </location>
</feature>
<feature type="topological domain" description="Cytoplasmic" evidence="7">
    <location>
        <begin position="119"/>
        <end position="121"/>
    </location>
</feature>
<feature type="transmembrane region" description="Helical; Name=Helix 4" evidence="7">
    <location>
        <begin position="122"/>
        <end position="143"/>
    </location>
</feature>
<feature type="topological domain" description="Lumenal" evidence="7">
    <location>
        <begin position="144"/>
        <end position="166"/>
    </location>
</feature>
<feature type="transmembrane region" description="Helical; Name=Helix 5" evidence="7">
    <location>
        <begin position="167"/>
        <end position="186"/>
    </location>
</feature>
<feature type="topological domain" description="Cytoplasmic" evidence="7">
    <location>
        <begin position="187"/>
        <end position="192"/>
    </location>
</feature>
<feature type="transmembrane region" description="Helical; Name=Helix 6" evidence="7">
    <location>
        <begin position="193"/>
        <end position="213"/>
    </location>
</feature>
<feature type="topological domain" description="Lumenal" evidence="7">
    <location>
        <begin position="214"/>
        <end position="218"/>
    </location>
</feature>
<feature type="transmembrane region" description="Helical; Name=Helix 7" evidence="7">
    <location>
        <begin position="219"/>
        <end position="242"/>
    </location>
</feature>
<feature type="topological domain" description="Cytoplasmic" evidence="7">
    <location>
        <begin position="243"/>
        <end position="250"/>
    </location>
</feature>
<feature type="transmembrane region" description="Helical; Name=Helix 8" evidence="7">
    <location>
        <begin position="251"/>
        <end position="269"/>
    </location>
</feature>
<feature type="topological domain" description="Lumenal" evidence="7">
    <location>
        <begin position="270"/>
        <end position="271"/>
    </location>
</feature>
<feature type="transmembrane region" description="Helical; Name=Helix 9" evidence="7">
    <location>
        <begin position="272"/>
        <end position="293"/>
    </location>
</feature>
<feature type="topological domain" description="Cytoplasmic" evidence="7">
    <location>
        <begin position="294"/>
        <end position="375"/>
    </location>
</feature>
<feature type="transmembrane region" description="Helical; Name=Helix 10" evidence="7">
    <location>
        <begin position="376"/>
        <end position="400"/>
    </location>
</feature>
<feature type="topological domain" description="Lumenal" evidence="7">
    <location>
        <begin position="401"/>
        <end position="408"/>
    </location>
</feature>
<feature type="binding site" evidence="8">
    <location>
        <begin position="44"/>
        <end position="46"/>
    </location>
    <ligand>
        <name>UDP-N-acetyl-alpha-D-glucosamine</name>
        <dbReference type="ChEBI" id="CHEBI:57705"/>
    </ligand>
</feature>
<feature type="binding site" evidence="7 21 22">
    <location>
        <position position="46"/>
    </location>
    <ligand>
        <name>tunicamycin A1</name>
        <dbReference type="ChEBI" id="CHEBI:64245"/>
        <note>inhibitor</note>
    </ligand>
</feature>
<feature type="binding site" evidence="8">
    <location>
        <position position="56"/>
    </location>
    <ligand>
        <name>UDP-N-acetyl-alpha-D-glucosamine</name>
        <dbReference type="ChEBI" id="CHEBI:57705"/>
    </ligand>
</feature>
<feature type="binding site" evidence="7 21">
    <location>
        <position position="119"/>
    </location>
    <ligand>
        <name>tunicamycin A1</name>
        <dbReference type="ChEBI" id="CHEBI:64245"/>
        <note>inhibitor</note>
    </ligand>
</feature>
<feature type="binding site" evidence="17">
    <location>
        <position position="125"/>
    </location>
    <ligand>
        <name>dolichyl phosphate</name>
        <dbReference type="ChEBI" id="CHEBI:57683"/>
    </ligand>
</feature>
<feature type="binding site" evidence="17">
    <location>
        <begin position="178"/>
        <end position="186"/>
    </location>
    <ligand>
        <name>dolichyl phosphate</name>
        <dbReference type="ChEBI" id="CHEBI:57683"/>
    </ligand>
</feature>
<feature type="binding site" evidence="8 24">
    <location>
        <position position="185"/>
    </location>
    <ligand>
        <name>Mg(2+)</name>
        <dbReference type="ChEBI" id="CHEBI:18420"/>
    </ligand>
</feature>
<feature type="binding site" evidence="7 22">
    <location>
        <position position="185"/>
    </location>
    <ligand>
        <name>tunicamycin A1</name>
        <dbReference type="ChEBI" id="CHEBI:64245"/>
        <note>inhibitor</note>
    </ligand>
</feature>
<feature type="binding site" evidence="8">
    <location>
        <position position="191"/>
    </location>
    <ligand>
        <name>UDP-N-acetyl-alpha-D-glucosamine</name>
        <dbReference type="ChEBI" id="CHEBI:57705"/>
    </ligand>
</feature>
<feature type="binding site" evidence="8 24">
    <location>
        <position position="252"/>
    </location>
    <ligand>
        <name>Mg(2+)</name>
        <dbReference type="ChEBI" id="CHEBI:18420"/>
    </ligand>
</feature>
<feature type="binding site" evidence="7 21">
    <location>
        <position position="252"/>
    </location>
    <ligand>
        <name>tunicamycin A1</name>
        <dbReference type="ChEBI" id="CHEBI:64245"/>
        <note>inhibitor</note>
    </ligand>
</feature>
<feature type="binding site" evidence="8">
    <location>
        <begin position="301"/>
        <end position="303"/>
    </location>
    <ligand>
        <name>UDP-N-acetyl-alpha-D-glucosamine</name>
        <dbReference type="ChEBI" id="CHEBI:57705"/>
    </ligand>
</feature>
<feature type="binding site" evidence="7 21 22">
    <location>
        <position position="303"/>
    </location>
    <ligand>
        <name>tunicamycin A1</name>
        <dbReference type="ChEBI" id="CHEBI:64245"/>
        <note>inhibitor</note>
    </ligand>
</feature>
<feature type="glycosylation site" description="N-linked (GlcNAc...) asparagine" evidence="2">
    <location>
        <position position="146"/>
    </location>
</feature>
<feature type="splice variant" id="VSP_008886" description="In isoform 3." evidence="11">
    <location>
        <begin position="1"/>
        <end position="107"/>
    </location>
</feature>
<feature type="splice variant" id="VSP_001803" description="In isoform 2." evidence="14">
    <location>
        <begin position="1"/>
        <end position="8"/>
    </location>
</feature>
<feature type="sequence variant" id="VAR_036422" description="In a breast cancer sample; somatic mutation." evidence="5">
    <original>M</original>
    <variation>I</variation>
    <location>
        <position position="9"/>
    </location>
</feature>
<feature type="sequence variant" id="VAR_068810" description="In CMS13; strongly reduced UDP-N-acetylglucosamine-dolichyl-phosphate N-acetylglucosaminephosphotransferase activity; dbSNP:rs376039938." evidence="6 8">
    <original>M</original>
    <variation>I</variation>
    <location>
        <position position="108"/>
    </location>
</feature>
<feature type="sequence variant" id="VAR_068811" description="In CMS13; mildly reduced UDP-N-acetylglucosamine-dolichyl-phosphate N-acetylglucosaminephosphotransferase activity; dbSNP:rs387907243." evidence="6 8">
    <original>V</original>
    <variation>I</variation>
    <location>
        <position position="117"/>
    </location>
</feature>
<feature type="sequence variant" id="VAR_068812" description="In CMS13; strongly reduced UDP-N-acetylglucosamine-dolichyl-phosphate N-acetylglucosaminephosphotransferase activity; dbSNP:rs387907244." evidence="6 8">
    <original>L</original>
    <variation>M</variation>
    <location>
        <position position="120"/>
    </location>
</feature>
<feature type="sequence variant" id="VAR_068813" description="In CMS13; increased UDP-N-acetylglucosamine-dolichyl-phosphate N-acetylglucosaminephosphotransferase activity; dbSNP:rs762676399." evidence="6 8">
    <original>G</original>
    <variation>S</variation>
    <location>
        <position position="160"/>
    </location>
</feature>
<feature type="sequence variant" id="VAR_017243" description="In CDG1J; strongly reduced UDP-N-acetylglucosamine-dolichyl-phosphate N-acetylglucosaminephosphotransferase activity; dbSNP:rs28934876." evidence="3 8">
    <original>Y</original>
    <variation>C</variation>
    <location>
        <position position="170"/>
    </location>
</feature>
<feature type="sequence variant" id="VAR_068814" description="In CMS13; strongly reduced UDP-N-acetylglucosamine-dolichyl-phosphate N-acetylglucosaminephosphotransferase activity; dbSNP:rs768464558." evidence="6 8">
    <original>G</original>
    <variation>S</variation>
    <location>
        <position position="192"/>
    </location>
</feature>
<feature type="sequence variant" id="VAR_068815" description="In CMS13; increased UDP-N-acetylglucosamine-dolichyl-phosphate N-acetylglucosaminephosphotransferase activity; dbSNP:rs387907245." evidence="6 8">
    <original>V</original>
    <variation>G</variation>
    <location>
        <position position="264"/>
    </location>
</feature>
<feature type="sequence variant" id="VAR_011391" description="In dbSNP:rs643788." evidence="4">
    <original>I</original>
    <variation>V</variation>
    <location>
        <position position="393"/>
    </location>
</feature>
<feature type="mutagenesis site" description="Mildly reduced UDP-N-acetylglucosamine-dolichyl-phosphate N-acetylglucosaminephosphotransferase activity." evidence="8">
    <original>P</original>
    <variation>S</variation>
    <location>
        <position position="30"/>
    </location>
</feature>
<feature type="mutagenesis site" description="No significant effect on UDP-N-acetylglucosamine-dolichyl-phosphate N-acetylglucosaminephosphotransferase activity." evidence="8">
    <original>I</original>
    <variation>N</variation>
    <location>
        <position position="69"/>
    </location>
</feature>
<feature type="mutagenesis site" description="Impairs protein stability." evidence="8">
    <original>L</original>
    <variation>F</variation>
    <location>
        <position position="103"/>
    </location>
</feature>
<feature type="mutagenesis site" description="No significant effect on UDP-N-acetylglucosamine-dolichyl-phosphate N-acetylglucosaminephosphotransferase activity." evidence="8">
    <original>A</original>
    <variation>G</variation>
    <location>
        <position position="114"/>
    </location>
</feature>
<feature type="mutagenesis site" description="Strongly reduced UDP-N-acetylglucosamine-dolichyl-phosphate N-acetylglucosaminephosphotransferase activity." evidence="8">
    <original>D</original>
    <variation>A</variation>
    <variation>N</variation>
    <location>
        <position position="115"/>
    </location>
</feature>
<feature type="mutagenesis site" description="Mildly reduced UDP-N-acetylglucosamine-dolichyl-phosphate N-acetylglucosaminephosphotransferase activity." evidence="8">
    <original>D</original>
    <variation>E</variation>
    <location>
        <position position="115"/>
    </location>
</feature>
<feature type="mutagenesis site" description="Strongly reduced UDP-N-acetylglucosamine-dolichyl-phosphate N-acetylglucosaminephosphotransferase activity." evidence="8">
    <original>D</original>
    <variation>A</variation>
    <variation>N</variation>
    <location>
        <position position="116"/>
    </location>
</feature>
<feature type="mutagenesis site" description="Strongly reduced UDP-N-acetylglucosamine-dolichyl-phosphate N-acetylglucosaminephosphotransferase activity." evidence="8">
    <original>W</original>
    <variation>A</variation>
    <location>
        <position position="122"/>
    </location>
</feature>
<feature type="mutagenesis site" description="Loss of UDP-N-acetylglucosamine-dolichyl-phosphate N-acetylglucosaminephosphotransferase activity." evidence="8">
    <original>K</original>
    <variation>A</variation>
    <variation>E</variation>
    <variation>N</variation>
    <location>
        <position position="125"/>
    </location>
</feature>
<feature type="mutagenesis site" description="Strongly reduced UDP-N-acetylglucosamine-dolichyl-phosphate N-acetylglucosaminephosphotransferase activity." evidence="8">
    <original>L</original>
    <variation>P</variation>
    <location>
        <position position="168"/>
    </location>
</feature>
<feature type="mutagenesis site" description="Loss of UDP-N-acetylglucosamine-dolichyl-phosphate N-acetylglucosaminephosphotransferase activity." evidence="8">
    <original>N</original>
    <variation>A</variation>
    <location>
        <position position="182"/>
    </location>
</feature>
<feature type="mutagenesis site" description="Loss of UDP-N-acetylglucosamine-dolichyl-phosphate N-acetylglucosaminephosphotransferase activity." evidence="8">
    <original>N</original>
    <variation>A</variation>
    <variation>D</variation>
    <location>
        <position position="185"/>
    </location>
</feature>
<feature type="mutagenesis site" description="Reduces binding to inhibitor. Nearly abolishes UDP-N-acetylglucosamine-dolichyl-phosphate N-acetylglucosaminephosphotransferase activity." evidence="7 8">
    <original>D</original>
    <variation>A</variation>
    <location>
        <position position="252"/>
    </location>
</feature>
<feature type="mutagenesis site" description="No significant effect on UDP-N-acetylglucosamine-dolichyl-phosphate N-acetylglucosaminephosphotransferase activity." evidence="8">
    <original>V</original>
    <variation>M</variation>
    <location>
        <position position="264"/>
    </location>
</feature>
<feature type="mutagenesis site" description="Loss of UDP-N-acetylglucosamine-dolichyl-phosphate N-acetylglucosaminephosphotransferase activity." evidence="8">
    <original>R</original>
    <variation>C</variation>
    <variation>H</variation>
    <location>
        <position position="301"/>
    </location>
</feature>
<feature type="mutagenesis site" description="Loss of UDP-N-acetylglucosamine-dolichyl-phosphate N-acetylglucosaminephosphotransferase activity." evidence="8">
    <original>H</original>
    <variation>A</variation>
    <location>
        <position position="302"/>
    </location>
</feature>
<feature type="mutagenesis site" description="Reduced UDP-N-acetylglucosamine-dolichyl-phosphate N-acetylglucosaminephosphotransferase activity." evidence="8">
    <original>R</original>
    <variation>A</variation>
    <location>
        <position position="303"/>
    </location>
</feature>
<feature type="mutagenesis site" description="No significant effect on UDP-N-acetylglucosamine-dolichyl-phosphate N-acetylglucosaminephosphotransferase activity." evidence="8">
    <original>L</original>
    <variation>R</variation>
    <location>
        <position position="385"/>
    </location>
</feature>
<feature type="sequence conflict" description="In Ref. 1; CAB04787." evidence="15" ref="1">
    <original>R</original>
    <variation>L</variation>
    <location>
        <position position="33"/>
    </location>
</feature>
<feature type="sequence conflict" description="In Ref. 2; AAG43168." evidence="15" ref="2">
    <original>P</original>
    <variation>H</variation>
    <location>
        <position position="129"/>
    </location>
</feature>
<feature type="helix" evidence="27">
    <location>
        <begin position="9"/>
        <end position="31"/>
    </location>
</feature>
<feature type="helix" evidence="27">
    <location>
        <begin position="33"/>
        <end position="38"/>
    </location>
</feature>
<feature type="strand" evidence="27">
    <location>
        <begin position="42"/>
        <end position="44"/>
    </location>
</feature>
<feature type="strand" evidence="27">
    <location>
        <begin position="53"/>
        <end position="55"/>
    </location>
</feature>
<feature type="helix" evidence="27">
    <location>
        <begin position="59"/>
        <end position="73"/>
    </location>
</feature>
<feature type="helix" evidence="27">
    <location>
        <begin position="76"/>
        <end position="78"/>
    </location>
</feature>
<feature type="helix" evidence="27">
    <location>
        <begin position="92"/>
        <end position="118"/>
    </location>
</feature>
<feature type="helix" evidence="27">
    <location>
        <begin position="122"/>
        <end position="143"/>
    </location>
</feature>
<feature type="turn" evidence="25">
    <location>
        <begin position="155"/>
        <end position="157"/>
    </location>
</feature>
<feature type="helix" evidence="27">
    <location>
        <begin position="167"/>
        <end position="186"/>
    </location>
</feature>
<feature type="helix" evidence="27">
    <location>
        <begin position="193"/>
        <end position="213"/>
    </location>
</feature>
<feature type="strand" evidence="27">
    <location>
        <begin position="214"/>
        <end position="216"/>
    </location>
</feature>
<feature type="helix" evidence="27">
    <location>
        <begin position="219"/>
        <end position="242"/>
    </location>
</feature>
<feature type="strand" evidence="27">
    <location>
        <begin position="243"/>
        <end position="245"/>
    </location>
</feature>
<feature type="helix" evidence="27">
    <location>
        <begin position="251"/>
        <end position="269"/>
    </location>
</feature>
<feature type="helix" evidence="27">
    <location>
        <begin position="272"/>
        <end position="278"/>
    </location>
</feature>
<feature type="helix" evidence="27">
    <location>
        <begin position="280"/>
        <end position="288"/>
    </location>
</feature>
<feature type="helix" evidence="27">
    <location>
        <begin position="290"/>
        <end position="293"/>
    </location>
</feature>
<feature type="strand" evidence="27">
    <location>
        <begin position="306"/>
        <end position="308"/>
    </location>
</feature>
<feature type="turn" evidence="27">
    <location>
        <begin position="309"/>
        <end position="312"/>
    </location>
</feature>
<feature type="strand" evidence="27">
    <location>
        <begin position="313"/>
        <end position="315"/>
    </location>
</feature>
<feature type="strand" evidence="27">
    <location>
        <begin position="318"/>
        <end position="321"/>
    </location>
</feature>
<feature type="turn" evidence="27">
    <location>
        <begin position="323"/>
        <end position="325"/>
    </location>
</feature>
<feature type="helix" evidence="27">
    <location>
        <begin position="328"/>
        <end position="339"/>
    </location>
</feature>
<feature type="strand" evidence="26">
    <location>
        <begin position="345"/>
        <end position="349"/>
    </location>
</feature>
<feature type="strand" evidence="27">
    <location>
        <begin position="356"/>
        <end position="359"/>
    </location>
</feature>
<feature type="helix" evidence="27">
    <location>
        <begin position="363"/>
        <end position="371"/>
    </location>
</feature>
<feature type="helix" evidence="27">
    <location>
        <begin position="376"/>
        <end position="398"/>
    </location>
</feature>
<organism>
    <name type="scientific">Homo sapiens</name>
    <name type="common">Human</name>
    <dbReference type="NCBI Taxonomy" id="9606"/>
    <lineage>
        <taxon>Eukaryota</taxon>
        <taxon>Metazoa</taxon>
        <taxon>Chordata</taxon>
        <taxon>Craniata</taxon>
        <taxon>Vertebrata</taxon>
        <taxon>Euteleostomi</taxon>
        <taxon>Mammalia</taxon>
        <taxon>Eutheria</taxon>
        <taxon>Euarchontoglires</taxon>
        <taxon>Primates</taxon>
        <taxon>Haplorrhini</taxon>
        <taxon>Catarrhini</taxon>
        <taxon>Hominidae</taxon>
        <taxon>Homo</taxon>
    </lineage>
</organism>
<protein>
    <recommendedName>
        <fullName evidence="16">UDP-N-acetylglucosamine--dolichyl-phosphate N-acetylglucosaminephosphotransferase</fullName>
        <ecNumber evidence="7 8 9">2.7.8.15</ecNumber>
    </recommendedName>
    <alternativeName>
        <fullName evidence="13">GlcNAc-1-P transferase</fullName>
        <shortName>G1PT</shortName>
        <shortName evidence="13">GPT</shortName>
    </alternativeName>
    <alternativeName>
        <fullName>N-acetylglucosamine-1-phosphate transferase</fullName>
    </alternativeName>
</protein>
<proteinExistence type="evidence at protein level"/>
<name>GPT_HUMAN</name>
<comment type="function">
    <text evidence="7 8 9">UDP-N-acetylglucosamine--dolichyl-phosphate N-acetylglucosaminephosphotransferase that operates in the biosynthetic pathway of dolichol-linked oligosaccharides, the glycan precursors employed in protein asparagine (N)-glycosylation. The assembly of dolichol-linked oligosaccharides begins on the cytosolic side of the endoplasmic reticulum membrane and finishes in its lumen. The sequential addition of sugars to dolichol pyrophosphate produces dolichol-linked oligosaccharides containing fourteen sugars, including two GlcNAcs, nine mannoses and three glucoses. Once assembled, the oligosaccharide is transferred from the lipid to nascent proteins by oligosaccharyltransferases. Catalyzes the initial step of dolichol-linked oligosaccharide biosynthesis, transfering GlcNAc-1-P from cytosolic UDP-GlcNAc onto the carrier lipid dolichyl phosphate (P-dolichol), yielding GlcNAc-P-P-dolichol embedded in the cytoplasmic leaflet of the endoplasmic reticulum membrane.</text>
</comment>
<comment type="catalytic activity">
    <reaction evidence="7 8 9">
        <text>a di-trans,poly-cis-dolichyl phosphate + UDP-N-acetyl-alpha-D-glucosamine = an N-acetyl-alpha-D-glucosaminyl-diphospho-di-trans,poly-cis-dolichol + UMP</text>
        <dbReference type="Rhea" id="RHEA:13289"/>
        <dbReference type="Rhea" id="RHEA-COMP:19498"/>
        <dbReference type="Rhea" id="RHEA-COMP:19507"/>
        <dbReference type="ChEBI" id="CHEBI:57683"/>
        <dbReference type="ChEBI" id="CHEBI:57705"/>
        <dbReference type="ChEBI" id="CHEBI:57865"/>
        <dbReference type="ChEBI" id="CHEBI:58427"/>
        <dbReference type="EC" id="2.7.8.15"/>
    </reaction>
    <physiologicalReaction direction="left-to-right" evidence="7 8 9">
        <dbReference type="Rhea" id="RHEA:13290"/>
    </physiologicalReaction>
</comment>
<comment type="cofactor">
    <cofactor evidence="7 8">
        <name>Mg(2+)</name>
        <dbReference type="ChEBI" id="CHEBI:18420"/>
    </cofactor>
</comment>
<comment type="activity regulation">
    <text evidence="7 8 9 16">Inhibited by natural nucleoside antibiotic tunicamycin, which acts as a structural analog and competitor of UDP-GlcNAc (PubMed:29459785, PubMed:30388443, PubMed:9451016). Activated by mannosylphosphoryldolichol and phospholipids such as phosphatidylglycerol and phosphatidylcholine (Probable).</text>
</comment>
<comment type="biophysicochemical properties">
    <kinetics>
        <KM evidence="8">4.5 uM for UDP-N-acetylglucosamine</KM>
        <KM evidence="8">36 uM for dolichol phosphate</KM>
        <text evidence="8">kcat is 0.21 min(-1) with UDP-N-acetylglucosamine. kcat is 0.20 min(-1) with dolichol phosphate.</text>
    </kinetics>
</comment>
<comment type="pathway">
    <text evidence="7 8 9">Protein modification; protein glycosylation.</text>
</comment>
<comment type="subunit">
    <text evidence="7 8">Homodimer.</text>
</comment>
<comment type="interaction">
    <interactant intactId="EBI-3922860">
        <id>Q9H3H5</id>
    </interactant>
    <interactant intactId="EBI-466029">
        <id>P42858</id>
        <label>HTT</label>
    </interactant>
    <organismsDiffer>false</organismsDiffer>
    <experiments>3</experiments>
</comment>
<comment type="subcellular location">
    <subcellularLocation>
        <location evidence="1">Endoplasmic reticulum membrane</location>
        <topology evidence="7 8">Multi-pass membrane protein</topology>
    </subcellularLocation>
</comment>
<comment type="alternative products">
    <event type="alternative splicing"/>
    <isoform>
        <id>Q9H3H5-1</id>
        <name>1</name>
        <sequence type="displayed"/>
    </isoform>
    <isoform>
        <id>Q9H3H5-2</id>
        <name>2</name>
        <sequence type="described" ref="VSP_001803"/>
    </isoform>
    <isoform>
        <id>Q9H3H5-3</id>
        <name>3</name>
        <sequence type="described" ref="VSP_008886"/>
    </isoform>
</comment>
<comment type="disease" evidence="3 8">
    <disease id="DI-00342">
        <name>Congenital disorder of glycosylation 1J</name>
        <acronym>CDG1J</acronym>
        <description>A form of congenital disorder of glycosylation, a multisystem disorder caused by a defect in glycoprotein biosynthesis and characterized by under-glycosylated serum glycoproteins. Congenital disorders of glycosylation result in a wide variety of clinical features, such as defects in the nervous system development, psychomotor retardation, dysmorphic features, hypotonia, coagulation disorders, and immunodeficiency. The broad spectrum of features reflects the critical role of N-glycoproteins during embryonic development, differentiation, and maintenance of cell functions.</description>
        <dbReference type="MIM" id="608093"/>
    </disease>
    <text>The disease is caused by variants affecting the gene represented in this entry.</text>
</comment>
<comment type="disease" evidence="6 8">
    <disease id="DI-03511">
        <name>Myasthenic syndrome, congenital, 13</name>
        <acronym>CMS13</acronym>
        <description>A form of congenital myasthenic syndrome, a group of disorders characterized by failure of neuromuscular transmission, including pre-synaptic, synaptic, and post-synaptic disorders that are not of autoimmune origin. Clinical features are easy fatigability and muscle weakness. CMS13 is characterized by muscle weakness mostly affecting proximal limb muscles, minimal involvement of facial, ocular and bulbar muscles, and tubular aggregates present on muscle biopsy. Symptoms include difficulty walking and frequent falls. Younger patients show hypotonia and poor head control. Neurophysiological features indicate a disorder of neuromuscular transmission on electromyography.</description>
        <dbReference type="MIM" id="614750"/>
    </disease>
    <text>The disease is caused by variants affecting the gene represented in this entry.</text>
</comment>
<comment type="similarity">
    <text evidence="15">Belongs to the glycosyltransferase 4 family.</text>
</comment>
<comment type="online information" name="Functional Glycomics Gateway - GTase">
    <link uri="http://www.functionalglycomics.org/glycomics/molecule/jsp/glycoEnzyme/viewGlycoEnzyme.jsp?gbpId=gt_hum_543"/>
    <text>UDP-N-acetylglucosamine--dolichyl-phosphate N-acetylglucosaminephosphotransferase</text>
</comment>
<evidence type="ECO:0000250" key="1">
    <source>
        <dbReference type="UniProtKB" id="P23338"/>
    </source>
</evidence>
<evidence type="ECO:0000255" key="2"/>
<evidence type="ECO:0000269" key="3">
    <source>
    </source>
</evidence>
<evidence type="ECO:0000269" key="4">
    <source>
    </source>
</evidence>
<evidence type="ECO:0000269" key="5">
    <source>
    </source>
</evidence>
<evidence type="ECO:0000269" key="6">
    <source>
    </source>
</evidence>
<evidence type="ECO:0000269" key="7">
    <source>
    </source>
</evidence>
<evidence type="ECO:0000269" key="8">
    <source>
    </source>
</evidence>
<evidence type="ECO:0000269" key="9">
    <source>
    </source>
</evidence>
<evidence type="ECO:0000303" key="10">
    <source>
    </source>
</evidence>
<evidence type="ECO:0000303" key="11">
    <source>
    </source>
</evidence>
<evidence type="ECO:0000303" key="12">
    <source>
    </source>
</evidence>
<evidence type="ECO:0000303" key="13">
    <source>
    </source>
</evidence>
<evidence type="ECO:0000303" key="14">
    <source>
    </source>
</evidence>
<evidence type="ECO:0000305" key="15"/>
<evidence type="ECO:0000305" key="16">
    <source>
    </source>
</evidence>
<evidence type="ECO:0000305" key="17">
    <source>
    </source>
</evidence>
<evidence type="ECO:0000312" key="18">
    <source>
        <dbReference type="HGNC" id="HGNC:2995"/>
    </source>
</evidence>
<evidence type="ECO:0007744" key="19">
    <source>
        <dbReference type="PDB" id="5LEV"/>
    </source>
</evidence>
<evidence type="ECO:0007744" key="20">
    <source>
        <dbReference type="PDB" id="5O5E"/>
    </source>
</evidence>
<evidence type="ECO:0007744" key="21">
    <source>
        <dbReference type="PDB" id="6BW5"/>
    </source>
</evidence>
<evidence type="ECO:0007744" key="22">
    <source>
        <dbReference type="PDB" id="6BW6"/>
    </source>
</evidence>
<evidence type="ECO:0007744" key="23">
    <source>
        <dbReference type="PDB" id="6FM9"/>
    </source>
</evidence>
<evidence type="ECO:0007744" key="24">
    <source>
        <dbReference type="PDB" id="6FWZ"/>
    </source>
</evidence>
<evidence type="ECO:0007829" key="25">
    <source>
        <dbReference type="PDB" id="5O5E"/>
    </source>
</evidence>
<evidence type="ECO:0007829" key="26">
    <source>
        <dbReference type="PDB" id="6BW5"/>
    </source>
</evidence>
<evidence type="ECO:0007829" key="27">
    <source>
        <dbReference type="PDB" id="6BW6"/>
    </source>
</evidence>
<sequence length="408" mass="46090">MWAFSELPMPLLINLIVSLLGFVATVTLIPAFRGHFIAARLCGQDLNKTSRQQIPESQGVISGAVFLIILFCFIPFPFLNCFVKEQCKAFPHHEFVALIGALLAICCMIFLGFADDVLNLRWRHKLLLPTAASLPLLMVYFTNFGNTTIVVPKPFRPILGLHLDLGILYYVYMGLLAVFCTNAINILAGINGLEAGQSLVISASIIVFNLVELEGDCRDDHVFSLYFMIPFFFTTLGLLYHNWYPSRVFVGDTFCYFAGMTFAVVGILGHFSKTMLLFFMPQVFNFLYSLPQLLHIIPCPRHRIPRLNIKTGKLEMSYSKFKTKSLSFLGTFILKVAESLQLVTVHQSETEDGEFTECNNMTLINLLLKVLGPIHERNLTLLLLLLQILGSAITFSIRYQLVRLFYDV</sequence>
<keyword id="KW-0002">3D-structure</keyword>
<keyword id="KW-0025">Alternative splicing</keyword>
<keyword id="KW-0900">Congenital disorder of glycosylation</keyword>
<keyword id="KW-1004">Congenital myasthenic syndrome</keyword>
<keyword id="KW-0225">Disease variant</keyword>
<keyword id="KW-0256">Endoplasmic reticulum</keyword>
<keyword id="KW-0325">Glycoprotein</keyword>
<keyword id="KW-0328">Glycosyltransferase</keyword>
<keyword id="KW-0460">Magnesium</keyword>
<keyword id="KW-0472">Membrane</keyword>
<keyword id="KW-0479">Metal-binding</keyword>
<keyword id="KW-1267">Proteomics identification</keyword>
<keyword id="KW-1185">Reference proteome</keyword>
<keyword id="KW-0808">Transferase</keyword>
<keyword id="KW-0812">Transmembrane</keyword>
<keyword id="KW-1133">Transmembrane helix</keyword>